<comment type="function">
    <text evidence="1">Catalyzes the 2-thiolation of uridine at the wobble position (U34) of tRNA, leading to the formation of s(2)U34.</text>
</comment>
<comment type="catalytic activity">
    <reaction evidence="1">
        <text>S-sulfanyl-L-cysteinyl-[protein] + uridine(34) in tRNA + AH2 + ATP = 2-thiouridine(34) in tRNA + L-cysteinyl-[protein] + A + AMP + diphosphate + H(+)</text>
        <dbReference type="Rhea" id="RHEA:47032"/>
        <dbReference type="Rhea" id="RHEA-COMP:10131"/>
        <dbReference type="Rhea" id="RHEA-COMP:11726"/>
        <dbReference type="Rhea" id="RHEA-COMP:11727"/>
        <dbReference type="Rhea" id="RHEA-COMP:11728"/>
        <dbReference type="ChEBI" id="CHEBI:13193"/>
        <dbReference type="ChEBI" id="CHEBI:15378"/>
        <dbReference type="ChEBI" id="CHEBI:17499"/>
        <dbReference type="ChEBI" id="CHEBI:29950"/>
        <dbReference type="ChEBI" id="CHEBI:30616"/>
        <dbReference type="ChEBI" id="CHEBI:33019"/>
        <dbReference type="ChEBI" id="CHEBI:61963"/>
        <dbReference type="ChEBI" id="CHEBI:65315"/>
        <dbReference type="ChEBI" id="CHEBI:87170"/>
        <dbReference type="ChEBI" id="CHEBI:456215"/>
        <dbReference type="EC" id="2.8.1.13"/>
    </reaction>
</comment>
<comment type="subcellular location">
    <subcellularLocation>
        <location evidence="1">Cytoplasm</location>
    </subcellularLocation>
</comment>
<comment type="similarity">
    <text evidence="1">Belongs to the MnmA/TRMU family.</text>
</comment>
<proteinExistence type="inferred from homology"/>
<keyword id="KW-0067">ATP-binding</keyword>
<keyword id="KW-0963">Cytoplasm</keyword>
<keyword id="KW-1015">Disulfide bond</keyword>
<keyword id="KW-0547">Nucleotide-binding</keyword>
<keyword id="KW-1185">Reference proteome</keyword>
<keyword id="KW-0694">RNA-binding</keyword>
<keyword id="KW-0808">Transferase</keyword>
<keyword id="KW-0819">tRNA processing</keyword>
<keyword id="KW-0820">tRNA-binding</keyword>
<organism>
    <name type="scientific">Shouchella clausii (strain KSM-K16)</name>
    <name type="common">Alkalihalobacillus clausii</name>
    <dbReference type="NCBI Taxonomy" id="66692"/>
    <lineage>
        <taxon>Bacteria</taxon>
        <taxon>Bacillati</taxon>
        <taxon>Bacillota</taxon>
        <taxon>Bacilli</taxon>
        <taxon>Bacillales</taxon>
        <taxon>Bacillaceae</taxon>
        <taxon>Shouchella</taxon>
    </lineage>
</organism>
<reference key="1">
    <citation type="submission" date="2003-10" db="EMBL/GenBank/DDBJ databases">
        <title>The complete genome sequence of the alkaliphilic Bacillus clausii KSM-K16.</title>
        <authorList>
            <person name="Takaki Y."/>
            <person name="Kageyama Y."/>
            <person name="Shimamura S."/>
            <person name="Suzuki H."/>
            <person name="Nishi S."/>
            <person name="Hatada Y."/>
            <person name="Kawai S."/>
            <person name="Ito S."/>
            <person name="Horikoshi K."/>
        </authorList>
    </citation>
    <scope>NUCLEOTIDE SEQUENCE [LARGE SCALE GENOMIC DNA]</scope>
    <source>
        <strain>KSM-K16</strain>
    </source>
</reference>
<sequence length="364" mass="41035">MKKREDTRVVVGMSGGVDSSVTALLLKEQGYDVIGIFMKNWDDSNDSGFCSATEDYEDVERVAQQLGIPYYAVNFEKQYWDKVFTYFLEEYKAGRTPNPDVMCNKEIKFKAFLNHAISLGADYVATGHYAQLQELDGEYRLIKGADANKDQTYFLNALSQKQLSKVMFPLGHLQKAEVRKIAAEAELATATKKDSTGICFIGERDFKEFLQTFLPAQPGRMETMDGIDKGQHDGLMYYTLGQRQGLGIGGAGEPWFVIDKDLERNVLIVGQGYHHPGLYSDGLWATDMNWIAKEERTSPFTCKAKFRYRQEDQGVTVFPKEDGRAFIQFDQPQRAITPGQAVVLYEGDRCIGGGVIDKIHRENA</sequence>
<protein>
    <recommendedName>
        <fullName evidence="1">tRNA-specific 2-thiouridylase MnmA</fullName>
        <ecNumber evidence="1">2.8.1.13</ecNumber>
    </recommendedName>
</protein>
<name>MNMA_SHOC1</name>
<accession>Q5WHN4</accession>
<gene>
    <name evidence="1" type="primary">mnmA</name>
    <name type="synonym">trmU</name>
    <name type="ordered locus">ABC1586</name>
</gene>
<evidence type="ECO:0000255" key="1">
    <source>
        <dbReference type="HAMAP-Rule" id="MF_00144"/>
    </source>
</evidence>
<dbReference type="EC" id="2.8.1.13" evidence="1"/>
<dbReference type="EMBL" id="AP006627">
    <property type="protein sequence ID" value="BAD64121.1"/>
    <property type="molecule type" value="Genomic_DNA"/>
</dbReference>
<dbReference type="RefSeq" id="WP_011246430.1">
    <property type="nucleotide sequence ID" value="NC_006582.1"/>
</dbReference>
<dbReference type="SMR" id="Q5WHN4"/>
<dbReference type="STRING" id="66692.ABC1586"/>
<dbReference type="KEGG" id="bcl:ABC1586"/>
<dbReference type="eggNOG" id="COG0482">
    <property type="taxonomic scope" value="Bacteria"/>
</dbReference>
<dbReference type="HOGENOM" id="CLU_035188_1_0_9"/>
<dbReference type="OrthoDB" id="9800696at2"/>
<dbReference type="Proteomes" id="UP000001168">
    <property type="component" value="Chromosome"/>
</dbReference>
<dbReference type="GO" id="GO:0005737">
    <property type="term" value="C:cytoplasm"/>
    <property type="evidence" value="ECO:0007669"/>
    <property type="project" value="UniProtKB-SubCell"/>
</dbReference>
<dbReference type="GO" id="GO:0005524">
    <property type="term" value="F:ATP binding"/>
    <property type="evidence" value="ECO:0007669"/>
    <property type="project" value="UniProtKB-KW"/>
</dbReference>
<dbReference type="GO" id="GO:0000049">
    <property type="term" value="F:tRNA binding"/>
    <property type="evidence" value="ECO:0007669"/>
    <property type="project" value="UniProtKB-KW"/>
</dbReference>
<dbReference type="GO" id="GO:0103016">
    <property type="term" value="F:tRNA-uridine 2-sulfurtransferase activity"/>
    <property type="evidence" value="ECO:0007669"/>
    <property type="project" value="UniProtKB-EC"/>
</dbReference>
<dbReference type="GO" id="GO:0002143">
    <property type="term" value="P:tRNA wobble position uridine thiolation"/>
    <property type="evidence" value="ECO:0007669"/>
    <property type="project" value="TreeGrafter"/>
</dbReference>
<dbReference type="CDD" id="cd01998">
    <property type="entry name" value="MnmA_TRMU-like"/>
    <property type="match status" value="1"/>
</dbReference>
<dbReference type="FunFam" id="2.30.30.280:FF:000001">
    <property type="entry name" value="tRNA-specific 2-thiouridylase MnmA"/>
    <property type="match status" value="1"/>
</dbReference>
<dbReference type="FunFam" id="2.40.30.10:FF:000023">
    <property type="entry name" value="tRNA-specific 2-thiouridylase MnmA"/>
    <property type="match status" value="1"/>
</dbReference>
<dbReference type="FunFam" id="3.40.50.620:FF:000004">
    <property type="entry name" value="tRNA-specific 2-thiouridylase MnmA"/>
    <property type="match status" value="1"/>
</dbReference>
<dbReference type="Gene3D" id="2.30.30.280">
    <property type="entry name" value="Adenine nucleotide alpha hydrolases-like domains"/>
    <property type="match status" value="1"/>
</dbReference>
<dbReference type="Gene3D" id="3.40.50.620">
    <property type="entry name" value="HUPs"/>
    <property type="match status" value="1"/>
</dbReference>
<dbReference type="Gene3D" id="2.40.30.10">
    <property type="entry name" value="Translation factors"/>
    <property type="match status" value="1"/>
</dbReference>
<dbReference type="HAMAP" id="MF_00144">
    <property type="entry name" value="tRNA_thiouridyl_MnmA"/>
    <property type="match status" value="1"/>
</dbReference>
<dbReference type="InterPro" id="IPR004506">
    <property type="entry name" value="MnmA-like"/>
</dbReference>
<dbReference type="InterPro" id="IPR046885">
    <property type="entry name" value="MnmA-like_C"/>
</dbReference>
<dbReference type="InterPro" id="IPR046884">
    <property type="entry name" value="MnmA-like_central"/>
</dbReference>
<dbReference type="InterPro" id="IPR023382">
    <property type="entry name" value="MnmA-like_central_sf"/>
</dbReference>
<dbReference type="InterPro" id="IPR014729">
    <property type="entry name" value="Rossmann-like_a/b/a_fold"/>
</dbReference>
<dbReference type="NCBIfam" id="NF001138">
    <property type="entry name" value="PRK00143.1"/>
    <property type="match status" value="1"/>
</dbReference>
<dbReference type="NCBIfam" id="TIGR00420">
    <property type="entry name" value="trmU"/>
    <property type="match status" value="1"/>
</dbReference>
<dbReference type="PANTHER" id="PTHR11933:SF5">
    <property type="entry name" value="MITOCHONDRIAL TRNA-SPECIFIC 2-THIOURIDYLASE 1"/>
    <property type="match status" value="1"/>
</dbReference>
<dbReference type="PANTHER" id="PTHR11933">
    <property type="entry name" value="TRNA 5-METHYLAMINOMETHYL-2-THIOURIDYLATE -METHYLTRANSFERASE"/>
    <property type="match status" value="1"/>
</dbReference>
<dbReference type="Pfam" id="PF03054">
    <property type="entry name" value="tRNA_Me_trans"/>
    <property type="match status" value="1"/>
</dbReference>
<dbReference type="Pfam" id="PF20258">
    <property type="entry name" value="tRNA_Me_trans_C"/>
    <property type="match status" value="1"/>
</dbReference>
<dbReference type="Pfam" id="PF20259">
    <property type="entry name" value="tRNA_Me_trans_M"/>
    <property type="match status" value="1"/>
</dbReference>
<dbReference type="SUPFAM" id="SSF52402">
    <property type="entry name" value="Adenine nucleotide alpha hydrolases-like"/>
    <property type="match status" value="1"/>
</dbReference>
<feature type="chain" id="PRO_1000009508" description="tRNA-specific 2-thiouridylase MnmA">
    <location>
        <begin position="1"/>
        <end position="364"/>
    </location>
</feature>
<feature type="region of interest" description="Interaction with target base in tRNA" evidence="1">
    <location>
        <begin position="98"/>
        <end position="100"/>
    </location>
</feature>
<feature type="region of interest" description="Interaction with tRNA" evidence="1">
    <location>
        <begin position="149"/>
        <end position="151"/>
    </location>
</feature>
<feature type="region of interest" description="Interaction with tRNA" evidence="1">
    <location>
        <begin position="307"/>
        <end position="308"/>
    </location>
</feature>
<feature type="active site" description="Nucleophile" evidence="1">
    <location>
        <position position="103"/>
    </location>
</feature>
<feature type="active site" description="Cysteine persulfide intermediate" evidence="1">
    <location>
        <position position="199"/>
    </location>
</feature>
<feature type="binding site" evidence="1">
    <location>
        <begin position="12"/>
        <end position="19"/>
    </location>
    <ligand>
        <name>ATP</name>
        <dbReference type="ChEBI" id="CHEBI:30616"/>
    </ligand>
</feature>
<feature type="binding site" evidence="1">
    <location>
        <position position="38"/>
    </location>
    <ligand>
        <name>ATP</name>
        <dbReference type="ChEBI" id="CHEBI:30616"/>
    </ligand>
</feature>
<feature type="binding site" evidence="1">
    <location>
        <position position="127"/>
    </location>
    <ligand>
        <name>ATP</name>
        <dbReference type="ChEBI" id="CHEBI:30616"/>
    </ligand>
</feature>
<feature type="site" description="Interaction with tRNA" evidence="1">
    <location>
        <position position="128"/>
    </location>
</feature>
<feature type="site" description="Interaction with tRNA" evidence="1">
    <location>
        <position position="340"/>
    </location>
</feature>
<feature type="disulfide bond" description="Alternate" evidence="1">
    <location>
        <begin position="103"/>
        <end position="199"/>
    </location>
</feature>